<sequence length="379" mass="41642">MSEFLPFSRPAMGVEELAAVKEVLESGWITTGPKNQALEQAFCQLTGNQHAIAVSSATAGMHITLMALEIGKGDEVITPSLTWVSTLNMISLLGATPVMVDVDRDTLMVTPEAIESAITPRTKAIIPVHYAGAPADIDAIRAIGERYGIAVIEDAAHAVGTYYKGRHIGAKGTAIFSFHAIKNITCAEGGLIVTDNENLARQLRMLKFHGLGVDAYDRQTWGRAPQAEVLTPGYKYNLTDINAAIALTQLAKLEHLNTRRREIAQQYQQALAALPFQPLSLPAWPHVHAWHLFIIRVDEQRCGISRDALMEALKERGIGTGLHFRAAHTQKYYRERFPTLSLPNTEWNSERICSLPLFPDMTTADADRVITALQQLAGQ</sequence>
<comment type="function">
    <text evidence="1">Catalyzes the conversion of UDP-4-keto-arabinose (UDP-Ara4O) to UDP-4-amino-4-deoxy-L-arabinose (UDP-L-Ara4N). The modified arabinose is attached to lipid A and is required for resistance to polymyxin and cationic antimicrobial peptides.</text>
</comment>
<comment type="catalytic activity">
    <reaction evidence="1">
        <text>UDP-4-amino-4-deoxy-beta-L-arabinose + 2-oxoglutarate = UDP-beta-L-threo-pentopyranos-4-ulose + L-glutamate</text>
        <dbReference type="Rhea" id="RHEA:24710"/>
        <dbReference type="ChEBI" id="CHEBI:16810"/>
        <dbReference type="ChEBI" id="CHEBI:29985"/>
        <dbReference type="ChEBI" id="CHEBI:58708"/>
        <dbReference type="ChEBI" id="CHEBI:58710"/>
        <dbReference type="EC" id="2.6.1.87"/>
    </reaction>
</comment>
<comment type="cofactor">
    <cofactor evidence="1">
        <name>pyridoxal 5'-phosphate</name>
        <dbReference type="ChEBI" id="CHEBI:597326"/>
    </cofactor>
</comment>
<comment type="pathway">
    <text evidence="1">Nucleotide-sugar biosynthesis; UDP-4-deoxy-4-formamido-beta-L-arabinose biosynthesis; UDP-4-deoxy-4-formamido-beta-L-arabinose from UDP-alpha-D-glucuronate: step 2/3.</text>
</comment>
<comment type="pathway">
    <text evidence="1">Bacterial outer membrane biogenesis; lipopolysaccharide biosynthesis.</text>
</comment>
<comment type="subunit">
    <text evidence="1">Homodimer.</text>
</comment>
<comment type="similarity">
    <text evidence="1">Belongs to the DegT/DnrJ/EryC1 family. ArnB subfamily.</text>
</comment>
<proteinExistence type="inferred from homology"/>
<organism>
    <name type="scientific">Escherichia coli O139:H28 (strain E24377A / ETEC)</name>
    <dbReference type="NCBI Taxonomy" id="331111"/>
    <lineage>
        <taxon>Bacteria</taxon>
        <taxon>Pseudomonadati</taxon>
        <taxon>Pseudomonadota</taxon>
        <taxon>Gammaproteobacteria</taxon>
        <taxon>Enterobacterales</taxon>
        <taxon>Enterobacteriaceae</taxon>
        <taxon>Escherichia</taxon>
    </lineage>
</organism>
<feature type="chain" id="PRO_1000065682" description="UDP-4-amino-4-deoxy-L-arabinose--oxoglutarate aminotransferase">
    <location>
        <begin position="1"/>
        <end position="379"/>
    </location>
</feature>
<feature type="modified residue" description="N6-(pyridoxal phosphate)lysine" evidence="1">
    <location>
        <position position="182"/>
    </location>
</feature>
<keyword id="KW-0032">Aminotransferase</keyword>
<keyword id="KW-0046">Antibiotic resistance</keyword>
<keyword id="KW-0441">Lipid A biosynthesis</keyword>
<keyword id="KW-0444">Lipid biosynthesis</keyword>
<keyword id="KW-0443">Lipid metabolism</keyword>
<keyword id="KW-0448">Lipopolysaccharide biosynthesis</keyword>
<keyword id="KW-0663">Pyridoxal phosphate</keyword>
<keyword id="KW-1185">Reference proteome</keyword>
<keyword id="KW-0808">Transferase</keyword>
<accession>A7ZP71</accession>
<dbReference type="EC" id="2.6.1.87" evidence="1"/>
<dbReference type="EMBL" id="CP000800">
    <property type="protein sequence ID" value="ABV16773.1"/>
    <property type="molecule type" value="Genomic_DNA"/>
</dbReference>
<dbReference type="RefSeq" id="WP_001388277.1">
    <property type="nucleotide sequence ID" value="NC_009801.1"/>
</dbReference>
<dbReference type="SMR" id="A7ZP71"/>
<dbReference type="GeneID" id="93774921"/>
<dbReference type="KEGG" id="ecw:EcE24377A_2548"/>
<dbReference type="HOGENOM" id="CLU_033332_0_3_6"/>
<dbReference type="UniPathway" id="UPA00030"/>
<dbReference type="UniPathway" id="UPA00032">
    <property type="reaction ID" value="UER00493"/>
</dbReference>
<dbReference type="Proteomes" id="UP000001122">
    <property type="component" value="Chromosome"/>
</dbReference>
<dbReference type="GO" id="GO:0016020">
    <property type="term" value="C:membrane"/>
    <property type="evidence" value="ECO:0007669"/>
    <property type="project" value="GOC"/>
</dbReference>
<dbReference type="GO" id="GO:0030170">
    <property type="term" value="F:pyridoxal phosphate binding"/>
    <property type="evidence" value="ECO:0007669"/>
    <property type="project" value="TreeGrafter"/>
</dbReference>
<dbReference type="GO" id="GO:0099620">
    <property type="term" value="F:UDP-4-amino-4-deoxy-L-arabinose aminotransferase"/>
    <property type="evidence" value="ECO:0007669"/>
    <property type="project" value="UniProtKB-EC"/>
</dbReference>
<dbReference type="GO" id="GO:0009245">
    <property type="term" value="P:lipid A biosynthetic process"/>
    <property type="evidence" value="ECO:0007669"/>
    <property type="project" value="UniProtKB-KW"/>
</dbReference>
<dbReference type="GO" id="GO:0009103">
    <property type="term" value="P:lipopolysaccharide biosynthetic process"/>
    <property type="evidence" value="ECO:0007669"/>
    <property type="project" value="UniProtKB-UniRule"/>
</dbReference>
<dbReference type="GO" id="GO:0046677">
    <property type="term" value="P:response to antibiotic"/>
    <property type="evidence" value="ECO:0007669"/>
    <property type="project" value="UniProtKB-KW"/>
</dbReference>
<dbReference type="CDD" id="cd00616">
    <property type="entry name" value="AHBA_syn"/>
    <property type="match status" value="1"/>
</dbReference>
<dbReference type="FunFam" id="3.40.640.10:FF:000040">
    <property type="entry name" value="UDP-4-amino-4-deoxy-L-arabinose--oxoglutarate aminotransferase"/>
    <property type="match status" value="1"/>
</dbReference>
<dbReference type="FunFam" id="3.90.1150.10:FF:000030">
    <property type="entry name" value="UDP-4-amino-4-deoxy-L-arabinose--oxoglutarate aminotransferase"/>
    <property type="match status" value="1"/>
</dbReference>
<dbReference type="Gene3D" id="3.90.1150.10">
    <property type="entry name" value="Aspartate Aminotransferase, domain 1"/>
    <property type="match status" value="1"/>
</dbReference>
<dbReference type="Gene3D" id="3.40.640.10">
    <property type="entry name" value="Type I PLP-dependent aspartate aminotransferase-like (Major domain)"/>
    <property type="match status" value="1"/>
</dbReference>
<dbReference type="HAMAP" id="MF_01167">
    <property type="entry name" value="ArnB_transfer"/>
    <property type="match status" value="1"/>
</dbReference>
<dbReference type="InterPro" id="IPR022850">
    <property type="entry name" value="ArnB_NH2Trfase"/>
</dbReference>
<dbReference type="InterPro" id="IPR000653">
    <property type="entry name" value="DegT/StrS_aminotransferase"/>
</dbReference>
<dbReference type="InterPro" id="IPR015424">
    <property type="entry name" value="PyrdxlP-dep_Trfase"/>
</dbReference>
<dbReference type="InterPro" id="IPR015421">
    <property type="entry name" value="PyrdxlP-dep_Trfase_major"/>
</dbReference>
<dbReference type="InterPro" id="IPR015422">
    <property type="entry name" value="PyrdxlP-dep_Trfase_small"/>
</dbReference>
<dbReference type="NCBIfam" id="NF008658">
    <property type="entry name" value="PRK11658.1"/>
    <property type="match status" value="1"/>
</dbReference>
<dbReference type="PANTHER" id="PTHR30244">
    <property type="entry name" value="TRANSAMINASE"/>
    <property type="match status" value="1"/>
</dbReference>
<dbReference type="PANTHER" id="PTHR30244:SF41">
    <property type="entry name" value="UDP-4-AMINO-4-DEOXY-L-ARABINOSE--OXOGLUTARATE AMINOTRANSFERASE"/>
    <property type="match status" value="1"/>
</dbReference>
<dbReference type="Pfam" id="PF01041">
    <property type="entry name" value="DegT_DnrJ_EryC1"/>
    <property type="match status" value="1"/>
</dbReference>
<dbReference type="PIRSF" id="PIRSF000390">
    <property type="entry name" value="PLP_StrS"/>
    <property type="match status" value="1"/>
</dbReference>
<dbReference type="SUPFAM" id="SSF53383">
    <property type="entry name" value="PLP-dependent transferases"/>
    <property type="match status" value="1"/>
</dbReference>
<protein>
    <recommendedName>
        <fullName evidence="1">UDP-4-amino-4-deoxy-L-arabinose--oxoglutarate aminotransferase</fullName>
        <ecNumber evidence="1">2.6.1.87</ecNumber>
    </recommendedName>
    <alternativeName>
        <fullName evidence="1">UDP-(beta-L-threo-pentapyranosyl-4''-ulose diphosphate) aminotransferase</fullName>
        <shortName evidence="1">UDP-Ara4O aminotransferase</shortName>
    </alternativeName>
    <alternativeName>
        <fullName evidence="1">UDP-4-amino-4-deoxy-L-arabinose aminotransferase</fullName>
    </alternativeName>
</protein>
<gene>
    <name evidence="1" type="primary">arnB</name>
    <name type="ordered locus">EcE24377A_2548</name>
</gene>
<reference key="1">
    <citation type="journal article" date="2008" name="J. Bacteriol.">
        <title>The pangenome structure of Escherichia coli: comparative genomic analysis of E. coli commensal and pathogenic isolates.</title>
        <authorList>
            <person name="Rasko D.A."/>
            <person name="Rosovitz M.J."/>
            <person name="Myers G.S.A."/>
            <person name="Mongodin E.F."/>
            <person name="Fricke W.F."/>
            <person name="Gajer P."/>
            <person name="Crabtree J."/>
            <person name="Sebaihia M."/>
            <person name="Thomson N.R."/>
            <person name="Chaudhuri R."/>
            <person name="Henderson I.R."/>
            <person name="Sperandio V."/>
            <person name="Ravel J."/>
        </authorList>
    </citation>
    <scope>NUCLEOTIDE SEQUENCE [LARGE SCALE GENOMIC DNA]</scope>
    <source>
        <strain>E24377A / ETEC</strain>
    </source>
</reference>
<evidence type="ECO:0000255" key="1">
    <source>
        <dbReference type="HAMAP-Rule" id="MF_01167"/>
    </source>
</evidence>
<name>ARNB_ECO24</name>